<gene>
    <name type="primary">PRM1</name>
</gene>
<sequence>MARYRRHSRSRSRSRYRRRRRRRSRHRNRRRTYRRSRRHSRRRRGRRRGYSRRRYSRRGRRRY</sequence>
<name>HSP1_PSEMD</name>
<organism>
    <name type="scientific">Pseudantechinus macdonnellensis</name>
    <name type="common">Fat-tailed marsupial mouse</name>
    <dbReference type="NCBI Taxonomy" id="9299"/>
    <lineage>
        <taxon>Eukaryota</taxon>
        <taxon>Metazoa</taxon>
        <taxon>Chordata</taxon>
        <taxon>Craniata</taxon>
        <taxon>Vertebrata</taxon>
        <taxon>Euteleostomi</taxon>
        <taxon>Mammalia</taxon>
        <taxon>Metatheria</taxon>
        <taxon>Dasyuromorphia</taxon>
        <taxon>Dasyuridae</taxon>
        <taxon>Pseudantechinus</taxon>
    </lineage>
</organism>
<proteinExistence type="evidence at transcript level"/>
<reference key="1">
    <citation type="journal article" date="1995" name="Proc. R. Soc. B">
        <title>Molecular phylogeny and evolution of marsupial protamine P1 genes.</title>
        <authorList>
            <person name="Retief J.D."/>
            <person name="Krajewski C."/>
            <person name="Westerman M."/>
            <person name="Winkfein R.J."/>
            <person name="Dixon G.H."/>
        </authorList>
    </citation>
    <scope>NUCLEOTIDE SEQUENCE [GENOMIC DNA]</scope>
    <source>
        <tissue>Sperm</tissue>
    </source>
</reference>
<accession>P67832</accession>
<accession>P42134</accession>
<accession>P42144</accession>
<accession>P42149</accession>
<protein>
    <recommendedName>
        <fullName>Sperm protamine P1</fullName>
    </recommendedName>
</protein>
<keyword id="KW-0158">Chromosome</keyword>
<keyword id="KW-0217">Developmental protein</keyword>
<keyword id="KW-0221">Differentiation</keyword>
<keyword id="KW-0226">DNA condensation</keyword>
<keyword id="KW-0238">DNA-binding</keyword>
<keyword id="KW-0544">Nucleosome core</keyword>
<keyword id="KW-0539">Nucleus</keyword>
<keyword id="KW-0744">Spermatogenesis</keyword>
<feature type="chain" id="PRO_0000191543" description="Sperm protamine P1">
    <location>
        <begin position="1"/>
        <end position="63"/>
    </location>
</feature>
<feature type="region of interest" description="Disordered" evidence="1">
    <location>
        <begin position="1"/>
        <end position="63"/>
    </location>
</feature>
<comment type="function">
    <text>Protamines substitute for histones in the chromatin of sperm during the haploid phase of spermatogenesis. They compact sperm DNA into a highly condensed, stable and inactive complex.</text>
</comment>
<comment type="subcellular location">
    <subcellularLocation>
        <location>Nucleus</location>
    </subcellularLocation>
    <subcellularLocation>
        <location>Chromosome</location>
    </subcellularLocation>
</comment>
<comment type="tissue specificity">
    <text>Testis.</text>
</comment>
<comment type="similarity">
    <text evidence="2">Belongs to the protamine P1 family.</text>
</comment>
<dbReference type="EMBL" id="L35337">
    <property type="protein sequence ID" value="AAA74603.1"/>
    <property type="molecule type" value="Genomic_DNA"/>
</dbReference>
<dbReference type="GO" id="GO:0000786">
    <property type="term" value="C:nucleosome"/>
    <property type="evidence" value="ECO:0007669"/>
    <property type="project" value="UniProtKB-KW"/>
</dbReference>
<dbReference type="GO" id="GO:0005634">
    <property type="term" value="C:nucleus"/>
    <property type="evidence" value="ECO:0007669"/>
    <property type="project" value="UniProtKB-SubCell"/>
</dbReference>
<dbReference type="GO" id="GO:0003677">
    <property type="term" value="F:DNA binding"/>
    <property type="evidence" value="ECO:0007669"/>
    <property type="project" value="UniProtKB-KW"/>
</dbReference>
<dbReference type="GO" id="GO:0030261">
    <property type="term" value="P:chromosome condensation"/>
    <property type="evidence" value="ECO:0007669"/>
    <property type="project" value="UniProtKB-KW"/>
</dbReference>
<dbReference type="GO" id="GO:0035092">
    <property type="term" value="P:sperm DNA condensation"/>
    <property type="evidence" value="ECO:0007669"/>
    <property type="project" value="InterPro"/>
</dbReference>
<dbReference type="InterPro" id="IPR000221">
    <property type="entry name" value="Protamine_P1"/>
</dbReference>
<dbReference type="PROSITE" id="PS00048">
    <property type="entry name" value="PROTAMINE_P1"/>
    <property type="match status" value="1"/>
</dbReference>
<evidence type="ECO:0000256" key="1">
    <source>
        <dbReference type="SAM" id="MobiDB-lite"/>
    </source>
</evidence>
<evidence type="ECO:0000305" key="2"/>